<accession>P9WIF2</accession>
<accession>L0T9E6</accession>
<accession>Q50594</accession>
<comment type="subcellular location">
    <subcellularLocation>
        <location evidence="3">Cell membrane</location>
        <topology evidence="3">Multi-pass membrane protein</topology>
    </subcellularLocation>
</comment>
<comment type="similarity">
    <text evidence="3">Belongs to the mycobacterial PE family. PGRS subfamily.</text>
</comment>
<name>PG34_MYCTO</name>
<evidence type="ECO:0000255" key="1"/>
<evidence type="ECO:0000256" key="2">
    <source>
        <dbReference type="SAM" id="MobiDB-lite"/>
    </source>
</evidence>
<evidence type="ECO:0000305" key="3"/>
<protein>
    <recommendedName>
        <fullName>Uncharacterized PE-PGRS family protein PE_PGRS34</fullName>
    </recommendedName>
</protein>
<keyword id="KW-1003">Cell membrane</keyword>
<keyword id="KW-0472">Membrane</keyword>
<keyword id="KW-1185">Reference proteome</keyword>
<keyword id="KW-0812">Transmembrane</keyword>
<keyword id="KW-1133">Transmembrane helix</keyword>
<gene>
    <name type="primary">PE_PGRS34</name>
    <name type="ordered locus">MT1888</name>
</gene>
<dbReference type="EMBL" id="AE000516">
    <property type="protein sequence ID" value="AAK46159.1"/>
    <property type="molecule type" value="Genomic_DNA"/>
</dbReference>
<dbReference type="PIR" id="H70663">
    <property type="entry name" value="H70663"/>
</dbReference>
<dbReference type="RefSeq" id="WP_003904712.1">
    <property type="nucleotide sequence ID" value="NZ_KK341227.1"/>
</dbReference>
<dbReference type="KEGG" id="mtc:MT1888"/>
<dbReference type="PATRIC" id="fig|83331.31.peg.2032"/>
<dbReference type="HOGENOM" id="CLU_000167_19_3_11"/>
<dbReference type="Proteomes" id="UP000001020">
    <property type="component" value="Chromosome"/>
</dbReference>
<dbReference type="GO" id="GO:0005886">
    <property type="term" value="C:plasma membrane"/>
    <property type="evidence" value="ECO:0007669"/>
    <property type="project" value="UniProtKB-SubCell"/>
</dbReference>
<dbReference type="FunFam" id="1.10.287.850:FF:000001">
    <property type="entry name" value="PE_PGRS39"/>
    <property type="match status" value="1"/>
</dbReference>
<dbReference type="Gene3D" id="1.10.287.850">
    <property type="entry name" value="HP0062-like domain"/>
    <property type="match status" value="1"/>
</dbReference>
<dbReference type="InterPro" id="IPR000084">
    <property type="entry name" value="PE-PGRS_N"/>
</dbReference>
<dbReference type="InterPro" id="IPR048996">
    <property type="entry name" value="PGRS_rpt"/>
</dbReference>
<dbReference type="Pfam" id="PF00934">
    <property type="entry name" value="PE"/>
    <property type="match status" value="1"/>
</dbReference>
<dbReference type="Pfam" id="PF21526">
    <property type="entry name" value="PGRS"/>
    <property type="match status" value="2"/>
</dbReference>
<dbReference type="PRINTS" id="PR01228">
    <property type="entry name" value="EGGSHELL"/>
</dbReference>
<dbReference type="SUPFAM" id="SSF140459">
    <property type="entry name" value="PE/PPE dimer-like"/>
    <property type="match status" value="1"/>
</dbReference>
<proteinExistence type="inferred from homology"/>
<organism>
    <name type="scientific">Mycobacterium tuberculosis (strain CDC 1551 / Oshkosh)</name>
    <dbReference type="NCBI Taxonomy" id="83331"/>
    <lineage>
        <taxon>Bacteria</taxon>
        <taxon>Bacillati</taxon>
        <taxon>Actinomycetota</taxon>
        <taxon>Actinomycetes</taxon>
        <taxon>Mycobacteriales</taxon>
        <taxon>Mycobacteriaceae</taxon>
        <taxon>Mycobacterium</taxon>
        <taxon>Mycobacterium tuberculosis complex</taxon>
    </lineage>
</organism>
<sequence length="515" mass="43916">MSFVVAAPEVVVAAASDLAGIGSAIGAANAAAAVPTMGVLAAGADEVSAAVADLFGAHAQAYQALSAQAALFHEQFVHAMTAGAGAYAGAEAADAAALDVLNGPFQALFGRPLIGDGANGAPGQPGGPGGLLYGNGGNGGNGGIGQPGGAGGDAGLIGNGGNGGIGGPGATGLAGGAGGVGGLLFGDGGNGGAGGLGTGPVGATGGIGGPGGAAVGLFGHGGAGGAGGLGKAGFAGGAGGTGGTGGLLYGNGGNGGNVPSGAADGGAGGDARLIGNGGDGGSVGAAPTGIGNGGNGGNGGWLYGDGGSGGSTLQGFSDGGTGGNAGMFGDGGNGGFSFFDGNGGDGGTGGTLIGNGGDGGNSVQTDGFLRGHGGDGGNAVGLIGNGGAGGAGSAGTGVFAPGGGSGGNGGNGALLVGNGGAGGSGGPTQIPSVAVPVTGAGGTGGNGGTAGLIGNGGNGGAAGVSGDGTPGTGGNGGYAQLIGDGGDGGPGDSGGPGGSGGTGGTLAGQNGSPGG</sequence>
<feature type="chain" id="PRO_0000428017" description="Uncharacterized PE-PGRS family protein PE_PGRS34">
    <location>
        <begin position="1"/>
        <end position="515"/>
    </location>
</feature>
<feature type="transmembrane region" description="Helical" evidence="1">
    <location>
        <begin position="1"/>
        <end position="21"/>
    </location>
</feature>
<feature type="transmembrane region" description="Helical" evidence="1">
    <location>
        <begin position="165"/>
        <end position="185"/>
    </location>
</feature>
<feature type="transmembrane region" description="Helical" evidence="1">
    <location>
        <begin position="199"/>
        <end position="219"/>
    </location>
</feature>
<feature type="domain" description="PE" evidence="1">
    <location>
        <begin position="1"/>
        <end position="93"/>
    </location>
</feature>
<feature type="region of interest" description="Disordered" evidence="2">
    <location>
        <begin position="349"/>
        <end position="368"/>
    </location>
</feature>
<feature type="region of interest" description="Disordered" evidence="2">
    <location>
        <begin position="463"/>
        <end position="515"/>
    </location>
</feature>
<feature type="compositionally biased region" description="Gly residues" evidence="2">
    <location>
        <begin position="349"/>
        <end position="360"/>
    </location>
</feature>
<reference key="1">
    <citation type="journal article" date="2002" name="J. Bacteriol.">
        <title>Whole-genome comparison of Mycobacterium tuberculosis clinical and laboratory strains.</title>
        <authorList>
            <person name="Fleischmann R.D."/>
            <person name="Alland D."/>
            <person name="Eisen J.A."/>
            <person name="Carpenter L."/>
            <person name="White O."/>
            <person name="Peterson J.D."/>
            <person name="DeBoy R.T."/>
            <person name="Dodson R.J."/>
            <person name="Gwinn M.L."/>
            <person name="Haft D.H."/>
            <person name="Hickey E.K."/>
            <person name="Kolonay J.F."/>
            <person name="Nelson W.C."/>
            <person name="Umayam L.A."/>
            <person name="Ermolaeva M.D."/>
            <person name="Salzberg S.L."/>
            <person name="Delcher A."/>
            <person name="Utterback T.R."/>
            <person name="Weidman J.F."/>
            <person name="Khouri H.M."/>
            <person name="Gill J."/>
            <person name="Mikula A."/>
            <person name="Bishai W."/>
            <person name="Jacobs W.R. Jr."/>
            <person name="Venter J.C."/>
            <person name="Fraser C.M."/>
        </authorList>
    </citation>
    <scope>NUCLEOTIDE SEQUENCE [LARGE SCALE GENOMIC DNA]</scope>
    <source>
        <strain>CDC 1551 / Oshkosh</strain>
    </source>
</reference>